<organism>
    <name type="scientific">Mycolicibacterium gilvum (strain PYR-GCK)</name>
    <name type="common">Mycobacterium gilvum (strain PYR-GCK)</name>
    <dbReference type="NCBI Taxonomy" id="350054"/>
    <lineage>
        <taxon>Bacteria</taxon>
        <taxon>Bacillati</taxon>
        <taxon>Actinomycetota</taxon>
        <taxon>Actinomycetes</taxon>
        <taxon>Mycobacteriales</taxon>
        <taxon>Mycobacteriaceae</taxon>
        <taxon>Mycolicibacterium</taxon>
    </lineage>
</organism>
<feature type="chain" id="PRO_0000368596" description="ATP synthase subunit b">
    <location>
        <begin position="1"/>
        <end position="171"/>
    </location>
</feature>
<feature type="transmembrane region" description="Helical" evidence="1">
    <location>
        <begin position="32"/>
        <end position="52"/>
    </location>
</feature>
<evidence type="ECO:0000255" key="1">
    <source>
        <dbReference type="HAMAP-Rule" id="MF_01398"/>
    </source>
</evidence>
<gene>
    <name evidence="1" type="primary">atpF</name>
    <name type="ordered locus">Mflv_2314</name>
</gene>
<comment type="function">
    <text evidence="1">F(1)F(0) ATP synthase produces ATP from ADP in the presence of a proton or sodium gradient. F-type ATPases consist of two structural domains, F(1) containing the extramembraneous catalytic core and F(0) containing the membrane proton channel, linked together by a central stalk and a peripheral stalk. During catalysis, ATP synthesis in the catalytic domain of F(1) is coupled via a rotary mechanism of the central stalk subunits to proton translocation.</text>
</comment>
<comment type="function">
    <text evidence="1">Component of the F(0) channel, it forms part of the peripheral stalk, linking F(1) to F(0).</text>
</comment>
<comment type="subunit">
    <text evidence="1">F-type ATPases have 2 components, F(1) - the catalytic core - and F(0) - the membrane proton channel. F(1) has five subunits: alpha(3), beta(3), gamma(1), delta(1), epsilon(1). F(0) has three main subunits: a(1), b(2) and c(10-14). The alpha and beta chains form an alternating ring which encloses part of the gamma chain. F(1) is attached to F(0) by a central stalk formed by the gamma and epsilon chains, while a peripheral stalk is formed by the delta and b chains.</text>
</comment>
<comment type="subcellular location">
    <subcellularLocation>
        <location evidence="1">Cell membrane</location>
        <topology evidence="1">Single-pass membrane protein</topology>
    </subcellularLocation>
</comment>
<comment type="similarity">
    <text evidence="1">Belongs to the ATPase B chain family.</text>
</comment>
<sequence length="171" mass="17845">MGDLTSTNLASAILAAEEGGGTSNFLLPNGTFFAVLLIFLIVLGVIAKWVVPPISKVLAEREAMLAKTAADNRKSAEQVAAARADYDKTLAEARGEASSIRDEARVAGRQVVDEKRATANGEVAETVKTADEKLTQQGSAAQSELQSSVDALSATLASRILGVDVNTRGSQ</sequence>
<dbReference type="EMBL" id="CP000656">
    <property type="protein sequence ID" value="ABP44792.1"/>
    <property type="molecule type" value="Genomic_DNA"/>
</dbReference>
<dbReference type="SMR" id="A4T8K9"/>
<dbReference type="STRING" id="350054.Mflv_2314"/>
<dbReference type="KEGG" id="mgi:Mflv_2314"/>
<dbReference type="eggNOG" id="COG0711">
    <property type="taxonomic scope" value="Bacteria"/>
</dbReference>
<dbReference type="HOGENOM" id="CLU_079215_5_2_11"/>
<dbReference type="OrthoDB" id="4638851at2"/>
<dbReference type="GO" id="GO:0005886">
    <property type="term" value="C:plasma membrane"/>
    <property type="evidence" value="ECO:0007669"/>
    <property type="project" value="UniProtKB-SubCell"/>
</dbReference>
<dbReference type="GO" id="GO:0045259">
    <property type="term" value="C:proton-transporting ATP synthase complex"/>
    <property type="evidence" value="ECO:0007669"/>
    <property type="project" value="UniProtKB-KW"/>
</dbReference>
<dbReference type="GO" id="GO:0046933">
    <property type="term" value="F:proton-transporting ATP synthase activity, rotational mechanism"/>
    <property type="evidence" value="ECO:0007669"/>
    <property type="project" value="UniProtKB-UniRule"/>
</dbReference>
<dbReference type="GO" id="GO:0046961">
    <property type="term" value="F:proton-transporting ATPase activity, rotational mechanism"/>
    <property type="evidence" value="ECO:0007669"/>
    <property type="project" value="TreeGrafter"/>
</dbReference>
<dbReference type="CDD" id="cd06503">
    <property type="entry name" value="ATP-synt_Fo_b"/>
    <property type="match status" value="1"/>
</dbReference>
<dbReference type="Gene3D" id="1.20.5.620">
    <property type="entry name" value="F1F0 ATP synthase subunit B, membrane domain"/>
    <property type="match status" value="1"/>
</dbReference>
<dbReference type="HAMAP" id="MF_01398">
    <property type="entry name" value="ATP_synth_b_bprime"/>
    <property type="match status" value="1"/>
</dbReference>
<dbReference type="InterPro" id="IPR028987">
    <property type="entry name" value="ATP_synth_B-like_membr_sf"/>
</dbReference>
<dbReference type="InterPro" id="IPR002146">
    <property type="entry name" value="ATP_synth_b/b'su_bac/chlpt"/>
</dbReference>
<dbReference type="InterPro" id="IPR050059">
    <property type="entry name" value="ATP_synthase_B_chain"/>
</dbReference>
<dbReference type="NCBIfam" id="NF004412">
    <property type="entry name" value="PRK05759.1-3"/>
    <property type="match status" value="1"/>
</dbReference>
<dbReference type="PANTHER" id="PTHR33445:SF1">
    <property type="entry name" value="ATP SYNTHASE SUBUNIT B"/>
    <property type="match status" value="1"/>
</dbReference>
<dbReference type="PANTHER" id="PTHR33445">
    <property type="entry name" value="ATP SYNTHASE SUBUNIT B', CHLOROPLASTIC"/>
    <property type="match status" value="1"/>
</dbReference>
<dbReference type="Pfam" id="PF00430">
    <property type="entry name" value="ATP-synt_B"/>
    <property type="match status" value="1"/>
</dbReference>
<dbReference type="SUPFAM" id="SSF81573">
    <property type="entry name" value="F1F0 ATP synthase subunit B, membrane domain"/>
    <property type="match status" value="1"/>
</dbReference>
<protein>
    <recommendedName>
        <fullName evidence="1">ATP synthase subunit b</fullName>
    </recommendedName>
    <alternativeName>
        <fullName evidence="1">ATP synthase F(0) sector subunit b</fullName>
    </alternativeName>
    <alternativeName>
        <fullName evidence="1">ATPase subunit I</fullName>
    </alternativeName>
    <alternativeName>
        <fullName evidence="1">F-type ATPase subunit b</fullName>
        <shortName evidence="1">F-ATPase subunit b</shortName>
    </alternativeName>
</protein>
<accession>A4T8K9</accession>
<proteinExistence type="inferred from homology"/>
<keyword id="KW-0066">ATP synthesis</keyword>
<keyword id="KW-1003">Cell membrane</keyword>
<keyword id="KW-0138">CF(0)</keyword>
<keyword id="KW-0375">Hydrogen ion transport</keyword>
<keyword id="KW-0406">Ion transport</keyword>
<keyword id="KW-0472">Membrane</keyword>
<keyword id="KW-0812">Transmembrane</keyword>
<keyword id="KW-1133">Transmembrane helix</keyword>
<keyword id="KW-0813">Transport</keyword>
<name>ATPF_MYCGI</name>
<reference key="1">
    <citation type="submission" date="2007-04" db="EMBL/GenBank/DDBJ databases">
        <title>Complete sequence of chromosome of Mycobacterium gilvum PYR-GCK.</title>
        <authorList>
            <consortium name="US DOE Joint Genome Institute"/>
            <person name="Copeland A."/>
            <person name="Lucas S."/>
            <person name="Lapidus A."/>
            <person name="Barry K."/>
            <person name="Detter J.C."/>
            <person name="Glavina del Rio T."/>
            <person name="Hammon N."/>
            <person name="Israni S."/>
            <person name="Dalin E."/>
            <person name="Tice H."/>
            <person name="Pitluck S."/>
            <person name="Chain P."/>
            <person name="Malfatti S."/>
            <person name="Shin M."/>
            <person name="Vergez L."/>
            <person name="Schmutz J."/>
            <person name="Larimer F."/>
            <person name="Land M."/>
            <person name="Hauser L."/>
            <person name="Kyrpides N."/>
            <person name="Mikhailova N."/>
            <person name="Miller C."/>
            <person name="Richardson P."/>
        </authorList>
    </citation>
    <scope>NUCLEOTIDE SEQUENCE [LARGE SCALE GENOMIC DNA]</scope>
    <source>
        <strain>PYR-GCK</strain>
    </source>
</reference>